<dbReference type="EMBL" id="U09086">
    <property type="protein sequence ID" value="AAB60329.1"/>
    <property type="molecule type" value="mRNA"/>
</dbReference>
<dbReference type="EMBL" id="U18270">
    <property type="protein sequence ID" value="AAB60433.1"/>
    <property type="molecule type" value="Genomic_DNA"/>
</dbReference>
<dbReference type="EMBL" id="U18266">
    <property type="protein sequence ID" value="AAB60433.1"/>
    <property type="status" value="JOINED"/>
    <property type="molecule type" value="Genomic_DNA"/>
</dbReference>
<dbReference type="EMBL" id="U18267">
    <property type="protein sequence ID" value="AAB60433.1"/>
    <property type="status" value="JOINED"/>
    <property type="molecule type" value="Genomic_DNA"/>
</dbReference>
<dbReference type="EMBL" id="U18268">
    <property type="protein sequence ID" value="AAB60433.1"/>
    <property type="status" value="JOINED"/>
    <property type="molecule type" value="Genomic_DNA"/>
</dbReference>
<dbReference type="EMBL" id="S76736">
    <property type="protein sequence ID" value="AAB33958.1"/>
    <property type="molecule type" value="mRNA"/>
</dbReference>
<dbReference type="CCDS" id="CCDS9064.1">
    <molecule id="P42166-1"/>
</dbReference>
<dbReference type="PIR" id="G01161">
    <property type="entry name" value="G01161"/>
</dbReference>
<dbReference type="RefSeq" id="NP_003267.1">
    <molecule id="P42166-1"/>
    <property type="nucleotide sequence ID" value="NM_003276.2"/>
</dbReference>
<dbReference type="PDB" id="1GJJ">
    <property type="method" value="NMR"/>
    <property type="chains" value="A=1-168"/>
</dbReference>
<dbReference type="PDB" id="1H9E">
    <property type="method" value="NMR"/>
    <property type="chains" value="A=2-57"/>
</dbReference>
<dbReference type="PDB" id="1H9F">
    <property type="method" value="NMR"/>
    <property type="chains" value="A=103-159"/>
</dbReference>
<dbReference type="PDB" id="8FN7">
    <property type="method" value="EM"/>
    <property type="resolution" value="2.80 A"/>
    <property type="chains" value="A/B/C/D/G/H/I/J=50-100"/>
</dbReference>
<dbReference type="PDB" id="8FND">
    <property type="method" value="EM"/>
    <property type="resolution" value="3.00 A"/>
    <property type="chains" value="A/B/C/D/G/H/I/J=50-100"/>
</dbReference>
<dbReference type="PDB" id="8FNG">
    <property type="method" value="EM"/>
    <property type="resolution" value="2.20 A"/>
    <property type="chains" value="A/B/C/D/G/H/I/J=50-100"/>
</dbReference>
<dbReference type="PDB" id="8FNH">
    <property type="method" value="EM"/>
    <property type="resolution" value="2.50 A"/>
    <property type="chains" value="A/B/C/D/G/H/I/J=50-100"/>
</dbReference>
<dbReference type="PDB" id="8FNJ">
    <property type="method" value="EM"/>
    <property type="resolution" value="2.40 A"/>
    <property type="chains" value="A/B/C/D/G/H/I/J=50-100"/>
</dbReference>
<dbReference type="PDB" id="8FNL">
    <property type="method" value="EM"/>
    <property type="resolution" value="2.80 A"/>
    <property type="chains" value="A/B/C/D/G/H/I/J=50-100"/>
</dbReference>
<dbReference type="PDB" id="8FNM">
    <property type="method" value="EM"/>
    <property type="resolution" value="2.80 A"/>
    <property type="chains" value="A/B/C/D/G/H/I/J=50-100"/>
</dbReference>
<dbReference type="PDB" id="8FNN">
    <property type="method" value="EM"/>
    <property type="resolution" value="2.70 A"/>
    <property type="chains" value="A/B/C/D/G/H/I/J=50-100"/>
</dbReference>
<dbReference type="PDB" id="8FNO">
    <property type="method" value="EM"/>
    <property type="resolution" value="2.50 A"/>
    <property type="chains" value="A/B/C/D/G/H/I/J=50-100"/>
</dbReference>
<dbReference type="PDB" id="8FNP">
    <property type="method" value="EM"/>
    <property type="resolution" value="2.20 A"/>
    <property type="chains" value="A/B/C/D/G/H/I/J=50-100"/>
</dbReference>
<dbReference type="PDB" id="8FNQ">
    <property type="method" value="EM"/>
    <property type="resolution" value="2.80 A"/>
    <property type="chains" value="A/B/C/D/G/H/I/J=50-100"/>
</dbReference>
<dbReference type="PDBsum" id="1GJJ"/>
<dbReference type="PDBsum" id="1H9E"/>
<dbReference type="PDBsum" id="1H9F"/>
<dbReference type="PDBsum" id="8FN7"/>
<dbReference type="PDBsum" id="8FND"/>
<dbReference type="PDBsum" id="8FNG"/>
<dbReference type="PDBsum" id="8FNH"/>
<dbReference type="PDBsum" id="8FNJ"/>
<dbReference type="PDBsum" id="8FNL"/>
<dbReference type="PDBsum" id="8FNM"/>
<dbReference type="PDBsum" id="8FNN"/>
<dbReference type="PDBsum" id="8FNO"/>
<dbReference type="PDBsum" id="8FNP"/>
<dbReference type="PDBsum" id="8FNQ"/>
<dbReference type="BMRB" id="P42166"/>
<dbReference type="SMR" id="P42166"/>
<dbReference type="BioGRID" id="112967">
    <property type="interactions" value="790"/>
</dbReference>
<dbReference type="FunCoup" id="P42166">
    <property type="interactions" value="1652"/>
</dbReference>
<dbReference type="IntAct" id="P42166">
    <property type="interactions" value="106"/>
</dbReference>
<dbReference type="MINT" id="P42166"/>
<dbReference type="STRING" id="9606.ENSP00000266732"/>
<dbReference type="GlyGen" id="P42166">
    <property type="glycosylation" value="8 sites, 1 N-linked glycan (1 site), 1 O-linked glycan (6 sites)"/>
</dbReference>
<dbReference type="iPTMnet" id="P42166"/>
<dbReference type="MetOSite" id="P42166"/>
<dbReference type="SwissPalm" id="P42166"/>
<dbReference type="BioMuta" id="TMPO"/>
<dbReference type="DMDM" id="1174689"/>
<dbReference type="CPTAC" id="CPTAC-949"/>
<dbReference type="jPOST" id="P42166"/>
<dbReference type="MassIVE" id="P42166"/>
<dbReference type="PaxDb" id="9606-ENSP00000266732"/>
<dbReference type="PeptideAtlas" id="P42166"/>
<dbReference type="ProteomicsDB" id="55488">
    <molecule id="P42166-1"/>
</dbReference>
<dbReference type="Pumba" id="P42166"/>
<dbReference type="Antibodypedia" id="2387">
    <property type="antibodies" value="401 antibodies from 37 providers"/>
</dbReference>
<dbReference type="DNASU" id="7112"/>
<dbReference type="Ensembl" id="ENST00000266732.8">
    <molecule id="P42166-1"/>
    <property type="protein sequence ID" value="ENSP00000266732.4"/>
    <property type="gene ID" value="ENSG00000120802.15"/>
</dbReference>
<dbReference type="GeneID" id="7112"/>
<dbReference type="UCSC" id="uc001tfh.3">
    <molecule id="P42166-1"/>
    <property type="organism name" value="human"/>
</dbReference>
<dbReference type="AGR" id="HGNC:11875"/>
<dbReference type="CTD" id="7112"/>
<dbReference type="DisGeNET" id="7112"/>
<dbReference type="GeneCards" id="TMPO"/>
<dbReference type="GeneReviews" id="TMPO"/>
<dbReference type="HGNC" id="HGNC:11875">
    <property type="gene designation" value="TMPO"/>
</dbReference>
<dbReference type="HPA" id="ENSG00000120802">
    <property type="expression patterns" value="Tissue enhanced (lymphoid)"/>
</dbReference>
<dbReference type="MalaCards" id="TMPO"/>
<dbReference type="MIM" id="188380">
    <property type="type" value="gene"/>
</dbReference>
<dbReference type="neXtProt" id="NX_P42166"/>
<dbReference type="OpenTargets" id="ENSG00000120802"/>
<dbReference type="PharmGKB" id="PA36576"/>
<dbReference type="VEuPathDB" id="HostDB:ENSG00000120802"/>
<dbReference type="eggNOG" id="ENOG502QWCI">
    <property type="taxonomic scope" value="Eukaryota"/>
</dbReference>
<dbReference type="GeneTree" id="ENSGT00940000154098"/>
<dbReference type="HOGENOM" id="CLU_397364_0_0_1"/>
<dbReference type="InParanoid" id="P42166"/>
<dbReference type="OrthoDB" id="10072362at2759"/>
<dbReference type="PAN-GO" id="P42166">
    <property type="GO annotations" value="0 GO annotations based on evolutionary models"/>
</dbReference>
<dbReference type="PhylomeDB" id="P42166"/>
<dbReference type="TreeFam" id="TF328426"/>
<dbReference type="PathwayCommons" id="P42166"/>
<dbReference type="SignaLink" id="P42166"/>
<dbReference type="BioGRID-ORCS" id="7112">
    <property type="hits" value="21 hits in 1159 CRISPR screens"/>
</dbReference>
<dbReference type="ChiTaRS" id="TMPO">
    <property type="organism name" value="human"/>
</dbReference>
<dbReference type="EvolutionaryTrace" id="P42166"/>
<dbReference type="GeneWiki" id="Thymopoietin"/>
<dbReference type="GenomeRNAi" id="7112"/>
<dbReference type="Pharos" id="P42166">
    <property type="development level" value="Tbio"/>
</dbReference>
<dbReference type="Proteomes" id="UP000005640">
    <property type="component" value="Chromosome 12"/>
</dbReference>
<dbReference type="RNAct" id="P42166">
    <property type="molecule type" value="protein"/>
</dbReference>
<dbReference type="Bgee" id="ENSG00000120802">
    <property type="expression patterns" value="Expressed in ventricular zone and 200 other cell types or tissues"/>
</dbReference>
<dbReference type="ExpressionAtlas" id="P42166">
    <property type="expression patterns" value="baseline and differential"/>
</dbReference>
<dbReference type="GO" id="GO:0000785">
    <property type="term" value="C:chromatin"/>
    <property type="evidence" value="ECO:0000314"/>
    <property type="project" value="MGI"/>
</dbReference>
<dbReference type="GO" id="GO:0005635">
    <property type="term" value="C:nuclear envelope"/>
    <property type="evidence" value="ECO:0000304"/>
    <property type="project" value="ProtInc"/>
</dbReference>
<dbReference type="GO" id="GO:0005634">
    <property type="term" value="C:nucleus"/>
    <property type="evidence" value="ECO:0000314"/>
    <property type="project" value="MGI"/>
</dbReference>
<dbReference type="GO" id="GO:0045296">
    <property type="term" value="F:cadherin binding"/>
    <property type="evidence" value="ECO:0007005"/>
    <property type="project" value="BHF-UCL"/>
</dbReference>
<dbReference type="GO" id="GO:0003677">
    <property type="term" value="F:DNA binding"/>
    <property type="evidence" value="ECO:0007669"/>
    <property type="project" value="UniProtKB-KW"/>
</dbReference>
<dbReference type="GO" id="GO:0005521">
    <property type="term" value="F:lamin binding"/>
    <property type="evidence" value="ECO:0000304"/>
    <property type="project" value="ProtInc"/>
</dbReference>
<dbReference type="CDD" id="cd12940">
    <property type="entry name" value="LEM_LAP2_LEMD1"/>
    <property type="match status" value="1"/>
</dbReference>
<dbReference type="CDD" id="cd12935">
    <property type="entry name" value="LEM_like"/>
    <property type="match status" value="1"/>
</dbReference>
<dbReference type="DisProt" id="DP02728"/>
<dbReference type="FunFam" id="1.10.287.3160:FF:000001">
    <property type="entry name" value="Thymopoietin isoform alpha"/>
    <property type="match status" value="1"/>
</dbReference>
<dbReference type="FunFam" id="1.10.720.40:FF:000002">
    <property type="entry name" value="Thymopoietin isoform alpha"/>
    <property type="match status" value="1"/>
</dbReference>
<dbReference type="FunFam" id="1.10.720.40:FF:000003">
    <property type="entry name" value="thymopoietin isoform X1"/>
    <property type="match status" value="1"/>
</dbReference>
<dbReference type="Gene3D" id="1.10.287.3160">
    <property type="match status" value="1"/>
</dbReference>
<dbReference type="Gene3D" id="1.10.720.40">
    <property type="match status" value="2"/>
</dbReference>
<dbReference type="InterPro" id="IPR021623">
    <property type="entry name" value="LAP2alpha_C"/>
</dbReference>
<dbReference type="InterPro" id="IPR013146">
    <property type="entry name" value="LEM-like_dom"/>
</dbReference>
<dbReference type="InterPro" id="IPR011015">
    <property type="entry name" value="LEM/LEM-like_dom_sf"/>
</dbReference>
<dbReference type="InterPro" id="IPR003887">
    <property type="entry name" value="LEM_dom"/>
</dbReference>
<dbReference type="InterPro" id="IPR051656">
    <property type="entry name" value="LEM_domain"/>
</dbReference>
<dbReference type="PANTHER" id="PTHR12019:SF24">
    <property type="entry name" value="LAMINA-ASSOCIATED POLYPEPTIDE 2, ISOFORM ALPHA"/>
    <property type="match status" value="1"/>
</dbReference>
<dbReference type="PANTHER" id="PTHR12019">
    <property type="entry name" value="LAMINA-ASSOCIATED POLYPEPTIDE THYMOPOIETIN"/>
    <property type="match status" value="1"/>
</dbReference>
<dbReference type="Pfam" id="PF11560">
    <property type="entry name" value="LAP2alpha"/>
    <property type="match status" value="1"/>
</dbReference>
<dbReference type="Pfam" id="PF03020">
    <property type="entry name" value="LEM"/>
    <property type="match status" value="1"/>
</dbReference>
<dbReference type="Pfam" id="PF08198">
    <property type="entry name" value="Thymopoietin"/>
    <property type="match status" value="1"/>
</dbReference>
<dbReference type="SMART" id="SM00540">
    <property type="entry name" value="LEM"/>
    <property type="match status" value="1"/>
</dbReference>
<dbReference type="SMART" id="SM01261">
    <property type="entry name" value="Thymopoietin"/>
    <property type="match status" value="1"/>
</dbReference>
<dbReference type="SUPFAM" id="SSF63451">
    <property type="entry name" value="LEM domain"/>
    <property type="match status" value="2"/>
</dbReference>
<dbReference type="PROSITE" id="PS50954">
    <property type="entry name" value="LEM"/>
    <property type="match status" value="1"/>
</dbReference>
<dbReference type="PROSITE" id="PS50955">
    <property type="entry name" value="LEM_LIKE"/>
    <property type="match status" value="1"/>
</dbReference>
<protein>
    <recommendedName>
        <fullName>Lamina-associated polypeptide 2, isoform alpha</fullName>
    </recommendedName>
    <alternativeName>
        <fullName>Thymopoietin isoform alpha</fullName>
        <shortName>TP alpha</shortName>
    </alternativeName>
    <alternativeName>
        <fullName>Thymopoietin-related peptide isoform alpha</fullName>
        <shortName>TPRP isoform alpha</shortName>
    </alternativeName>
    <component>
        <recommendedName>
            <fullName>Thymopoietin</fullName>
            <shortName>TP</shortName>
        </recommendedName>
        <alternativeName>
            <fullName>Splenin</fullName>
        </alternativeName>
    </component>
    <component>
        <recommendedName>
            <fullName>Thymopentin</fullName>
        </recommendedName>
        <alternativeName>
            <fullName>TP5</fullName>
        </alternativeName>
    </component>
</protein>
<sequence length="694" mass="75492">MPEFLEDPSVLTKDKLKSELVANNVTLPAGEQRKDVYVQLYLQHLTARNRPPLPAGTNSKGPPDFSSDEEREPTPVLGSGAAAAGRSRAAVGRKATKKTDKPRQEDKDDLDVTELTNEDLLDQLVKYGVNPGPIVGTTRKLYEKKLLKLREQGTESRSSTPLPTISSSAENTRQNGSNDSDRYSDNEEGKKKEHKKVKSTRDIVPFSELGTTPSGGGFFQGISFPEISTRPPLGSTELQAAKKVHTSKGDLPREPLVATNLPGRGQLQKLASERNLFISCKSSHDRCLEKSSSSSSQPEHSAMLVSTAASPSLIKETTTGYYKDIVENICGREKSGIQPLCPERSHISDQSPLSSKRKALEESESSQLISPPLAQAIRDYVNSLLVQGGVGSLPGTSNSMPPLDVENIQKRIDQSKFQETEFLSPPRKVPRLSEKSVEERDSGSFVAFQNIPGSELMSSFAKTVVSHSLTTLGLEVAKQSQHDKIDASELSFPFHESILKVIEEEWQQVDRQLPSLACKYPVSSREATQILSVPKVDDEILGFISEATPLGGIQAASTESCNQQLDLALCRAYEAAASALQIATHTAFVAKAMQADISQAAQILSSDPSRTHQALGILSKTYDAASYICEAAFDEVKMAAHTMGNATVGRRYLWLKDCKINLASKNKLASTPFKGGTLFGGEVCKVIKKRGNKH</sequence>
<gene>
    <name type="primary">TMPO</name>
    <name type="synonym">LAP2</name>
</gene>
<accession>P42166</accession>
<accession>P08918</accession>
<accession>P08919</accession>
<accession>Q14860</accession>
<accession>Q16295</accession>
<keyword id="KW-0002">3D-structure</keyword>
<keyword id="KW-0007">Acetylation</keyword>
<keyword id="KW-0025">Alternative splicing</keyword>
<keyword id="KW-0122">Cardiomyopathy</keyword>
<keyword id="KW-0158">Chromosome</keyword>
<keyword id="KW-0175">Coiled coil</keyword>
<keyword id="KW-0903">Direct protein sequencing</keyword>
<keyword id="KW-0238">DNA-binding</keyword>
<keyword id="KW-0488">Methylation</keyword>
<keyword id="KW-0539">Nucleus</keyword>
<keyword id="KW-0582">Pharmaceutical</keyword>
<keyword id="KW-0597">Phosphoprotein</keyword>
<keyword id="KW-1267">Proteomics identification</keyword>
<keyword id="KW-1185">Reference proteome</keyword>
<name>LAP2A_HUMAN</name>
<reference key="1">
    <citation type="journal article" date="1994" name="Proc. Natl. Acad. Sci. U.S.A.">
        <title>Three distinct human thymopoietins are derived from alternatively spliced mRNAs.</title>
        <authorList>
            <person name="Harris C.A."/>
            <person name="Andryuk P.J."/>
            <person name="Cline S.W."/>
            <person name="Chan H.K."/>
            <person name="Natarajan A."/>
            <person name="Siekierka J.J."/>
            <person name="Goldstein G."/>
        </authorList>
    </citation>
    <scope>NUCLEOTIDE SEQUENCE [MRNA] (ISOFORMS ALPHA; BETA AND GAMMA)</scope>
    <source>
        <tissue>Thymus</tissue>
    </source>
</reference>
<reference key="2">
    <citation type="journal article" date="1995" name="Genomics">
        <title>Structure and mapping of the human thymopoietin (TMPO) gene and relationship of human TMPO beta to rat lamin-associated polypeptide 2.</title>
        <authorList>
            <person name="Harris C.A."/>
            <person name="Andryuk P.J."/>
            <person name="Cline S.W."/>
            <person name="Siekierka J.J."/>
            <person name="Goldstein G."/>
        </authorList>
    </citation>
    <scope>NUCLEOTIDE SEQUENCE [GENOMIC DNA] (ISOFORMS ALPHA; BETA AND GAMMA)</scope>
    <scope>VARIANT GLU-599</scope>
</reference>
<reference key="3">
    <citation type="journal article" date="1994" name="Biochem. Mol. Biol. Int.">
        <title>A new thymopoietin precursor gene from human thymus.</title>
        <authorList>
            <person name="Hara H."/>
            <person name="Hayashi K."/>
            <person name="Ohta K."/>
            <person name="Itoh N."/>
            <person name="Ohta M."/>
        </authorList>
    </citation>
    <scope>NUCLEOTIDE SEQUENCE [MRNA] OF 1-526</scope>
    <source>
        <tissue>Thymus</tissue>
    </source>
</reference>
<reference key="4">
    <citation type="submission" date="2008-03" db="UniProtKB">
        <authorList>
            <person name="Bienvenut W.V."/>
            <person name="Vousden K.H."/>
            <person name="Lukashchuk N."/>
        </authorList>
    </citation>
    <scope>PROTEIN SEQUENCE OF 2-13; 127-139; 254-264; 417-427 AND 526-535</scope>
    <scope>CLEAVAGE OF INITIATOR METHIONINE</scope>
    <scope>IDENTIFICATION BY MASS SPECTROMETRY</scope>
    <source>
        <tissue>Lung carcinoma</tissue>
    </source>
</reference>
<reference key="5">
    <citation type="journal article" date="1987" name="Proc. Natl. Acad. Sci. U.S.A.">
        <title>Isolation and complete amino acid sequence of human thymopoietin and splenin.</title>
        <authorList>
            <person name="Audhya T."/>
            <person name="Schlesinger D.H."/>
            <person name="Goldstein G."/>
        </authorList>
    </citation>
    <scope>PARTIAL PROTEIN SEQUENCE</scope>
    <scope>RETRACTED PAPER</scope>
</reference>
<reference key="6">
    <citation type="journal article" date="1994" name="Proc. Natl. Acad. Sci. U.S.A.">
        <authorList>
            <person name="Goldstein G."/>
            <person name="Schlesinger D.H."/>
            <person name="Audhya T."/>
        </authorList>
    </citation>
    <scope>ERRATUM OF PUBMED:3473468</scope>
    <scope>RETRACTION NOTICE OF PUBMED:3473468</scope>
</reference>
<reference key="7">
    <citation type="journal article" date="1998" name="EMBO J.">
        <title>Detergent-salt resistance of LAP2alpha in interphase nuclei and phosphorylation-dependent association with chromosomes early in nuclear assembly implies functions in nuclear structure dynamics.</title>
        <authorList>
            <person name="Dechat T."/>
            <person name="Gotzmann J."/>
            <person name="Stockinger A."/>
            <person name="Harris C.A."/>
            <person name="Talle M.A."/>
            <person name="Siekierka J.J."/>
            <person name="Foisner R."/>
        </authorList>
    </citation>
    <scope>INTERACTION WITH CHROMOSOMES</scope>
    <scope>PHOSPHORYLATION</scope>
</reference>
<reference key="8">
    <citation type="journal article" date="2000" name="J. Cell Sci.">
        <title>Lamina-associated polypeptide 2alpha binds intranuclear A-type lamins.</title>
        <authorList>
            <person name="Dechat T."/>
            <person name="Korbei B."/>
            <person name="Vaughan O.A."/>
            <person name="Vlcek S."/>
            <person name="Hutchison C.J."/>
            <person name="Foisner R."/>
        </authorList>
    </citation>
    <scope>INTERACTION WITH LMNA</scope>
</reference>
<reference key="9">
    <citation type="journal article" date="2002" name="Mol. Biol. Cell">
        <title>Lamin A/C binding protein LAP2alpha is required for nuclear anchorage of retinoblastoma protein.</title>
        <authorList>
            <person name="Markiewicz E."/>
            <person name="Dechat T."/>
            <person name="Foisner R."/>
            <person name="Quinlan R.A."/>
            <person name="Hutchison C.J."/>
        </authorList>
    </citation>
    <scope>INTERACTION WITH LMNA AND RB1</scope>
</reference>
<reference key="10">
    <citation type="journal article" date="2006" name="Cell">
        <title>Global, in vivo, and site-specific phosphorylation dynamics in signaling networks.</title>
        <authorList>
            <person name="Olsen J.V."/>
            <person name="Blagoev B."/>
            <person name="Gnad F."/>
            <person name="Macek B."/>
            <person name="Kumar C."/>
            <person name="Mortensen P."/>
            <person name="Mann M."/>
        </authorList>
    </citation>
    <scope>PHOSPHORYLATION [LARGE SCALE ANALYSIS] AT SER-351</scope>
    <scope>IDENTIFICATION BY MASS SPECTROMETRY [LARGE SCALE ANALYSIS]</scope>
    <source>
        <tissue>Cervix carcinoma</tissue>
    </source>
</reference>
<reference key="11">
    <citation type="journal article" date="2007" name="Electrophoresis">
        <title>Toward a global characterization of the phosphoproteome in prostate cancer cells: identification of phosphoproteins in the LNCaP cell line.</title>
        <authorList>
            <person name="Giorgianni F."/>
            <person name="Zhao Y."/>
            <person name="Desiderio D.M."/>
            <person name="Beranova-Giorgianni S."/>
        </authorList>
    </citation>
    <scope>IDENTIFICATION BY MASS SPECTROMETRY [LARGE SCALE ANALYSIS]</scope>
    <source>
        <tissue>Prostate cancer</tissue>
    </source>
</reference>
<reference key="12">
    <citation type="journal article" date="2007" name="J. Proteome Res.">
        <title>Improved titanium dioxide enrichment of phosphopeptides from HeLa cells and high confident phosphopeptide identification by cross-validation of MS/MS and MS/MS/MS spectra.</title>
        <authorList>
            <person name="Yu L.R."/>
            <person name="Zhu Z."/>
            <person name="Chan K.C."/>
            <person name="Issaq H.J."/>
            <person name="Dimitrov D.S."/>
            <person name="Veenstra T.D."/>
        </authorList>
    </citation>
    <scope>PHOSPHORYLATION [LARGE SCALE ANALYSIS] AT SER-351 AND SER-424</scope>
    <scope>IDENTIFICATION BY MASS SPECTROMETRY [LARGE SCALE ANALYSIS]</scope>
    <source>
        <tissue>Cervix carcinoma</tissue>
    </source>
</reference>
<reference key="13">
    <citation type="journal article" date="2008" name="J. Proteome Res.">
        <title>Combining protein-based IMAC, peptide-based IMAC, and MudPIT for efficient phosphoproteomic analysis.</title>
        <authorList>
            <person name="Cantin G.T."/>
            <person name="Yi W."/>
            <person name="Lu B."/>
            <person name="Park S.K."/>
            <person name="Xu T."/>
            <person name="Lee J.-D."/>
            <person name="Yates J.R. III"/>
        </authorList>
    </citation>
    <scope>PHOSPHORYLATION [LARGE SCALE ANALYSIS] AT THR-74 AND SER-424</scope>
    <scope>IDENTIFICATION BY MASS SPECTROMETRY [LARGE SCALE ANALYSIS]</scope>
    <source>
        <tissue>Cervix carcinoma</tissue>
    </source>
</reference>
<reference key="14">
    <citation type="journal article" date="2008" name="J. Proteome Res.">
        <title>Phosphorylation analysis of primary human T lymphocytes using sequential IMAC and titanium oxide enrichment.</title>
        <authorList>
            <person name="Carrascal M."/>
            <person name="Ovelleiro D."/>
            <person name="Casas V."/>
            <person name="Gay M."/>
            <person name="Abian J."/>
        </authorList>
    </citation>
    <scope>IDENTIFICATION BY MASS SPECTROMETRY [LARGE SCALE ANALYSIS]</scope>
    <source>
        <tissue>T-cell</tissue>
    </source>
</reference>
<reference key="15">
    <citation type="journal article" date="2008" name="Mol. Cell">
        <title>Kinase-selective enrichment enables quantitative phosphoproteomics of the kinome across the cell cycle.</title>
        <authorList>
            <person name="Daub H."/>
            <person name="Olsen J.V."/>
            <person name="Bairlein M."/>
            <person name="Gnad F."/>
            <person name="Oppermann F.S."/>
            <person name="Korner R."/>
            <person name="Greff Z."/>
            <person name="Keri G."/>
            <person name="Stemmann O."/>
            <person name="Mann M."/>
        </authorList>
    </citation>
    <scope>PHOSPHORYLATION [LARGE SCALE ANALYSIS] AT THR-74; SER-351 AND SER-424</scope>
    <scope>IDENTIFICATION BY MASS SPECTROMETRY [LARGE SCALE ANALYSIS]</scope>
    <source>
        <tissue>Cervix carcinoma</tissue>
    </source>
</reference>
<reference key="16">
    <citation type="journal article" date="2008" name="Proc. Natl. Acad. Sci. U.S.A.">
        <title>A quantitative atlas of mitotic phosphorylation.</title>
        <authorList>
            <person name="Dephoure N."/>
            <person name="Zhou C."/>
            <person name="Villen J."/>
            <person name="Beausoleil S.A."/>
            <person name="Bakalarski C.E."/>
            <person name="Elledge S.J."/>
            <person name="Gygi S.P."/>
        </authorList>
    </citation>
    <scope>PHOSPHORYLATION [LARGE SCALE ANALYSIS] AT THR-57; SER-66; SER-67; THR-74; SER-79; THR-160; THR-164; SER-351; SER-370 AND SER-424</scope>
    <scope>IDENTIFICATION BY MASS SPECTROMETRY [LARGE SCALE ANALYSIS]</scope>
    <source>
        <tissue>Cervix carcinoma</tissue>
    </source>
</reference>
<reference key="17">
    <citation type="journal article" date="2008" name="Proteomics">
        <title>Large-scale phosphoproteome analysis of human liver tissue by enrichment and fractionation of phosphopeptides with strong anion exchange chromatography.</title>
        <authorList>
            <person name="Han G."/>
            <person name="Ye M."/>
            <person name="Zhou H."/>
            <person name="Jiang X."/>
            <person name="Feng S."/>
            <person name="Jiang X."/>
            <person name="Tian R."/>
            <person name="Wan D."/>
            <person name="Zou H."/>
            <person name="Gu J."/>
        </authorList>
    </citation>
    <scope>IDENTIFICATION BY MASS SPECTROMETRY [LARGE SCALE ANALYSIS]</scope>
    <source>
        <tissue>Liver</tissue>
    </source>
</reference>
<reference key="18">
    <citation type="journal article" date="2009" name="Anal. Chem.">
        <title>Lys-N and trypsin cover complementary parts of the phosphoproteome in a refined SCX-based approach.</title>
        <authorList>
            <person name="Gauci S."/>
            <person name="Helbig A.O."/>
            <person name="Slijper M."/>
            <person name="Krijgsveld J."/>
            <person name="Heck A.J."/>
            <person name="Mohammed S."/>
        </authorList>
    </citation>
    <scope>IDENTIFICATION BY MASS SPECTROMETRY [LARGE SCALE ANALYSIS]</scope>
</reference>
<reference key="19">
    <citation type="journal article" date="2009" name="Sci. Signal.">
        <title>Quantitative phosphoproteomic analysis of T cell receptor signaling reveals system-wide modulation of protein-protein interactions.</title>
        <authorList>
            <person name="Mayya V."/>
            <person name="Lundgren D.H."/>
            <person name="Hwang S.-I."/>
            <person name="Rezaul K."/>
            <person name="Wu L."/>
            <person name="Eng J.K."/>
            <person name="Rodionov V."/>
            <person name="Han D.K."/>
        </authorList>
    </citation>
    <scope>PHOSPHORYLATION [LARGE SCALE ANALYSIS] AT SER-66; SER-67; THR-74; SER-79; THR-154; THR-160; SER-351 AND SER-424</scope>
    <scope>IDENTIFICATION BY MASS SPECTROMETRY [LARGE SCALE ANALYSIS]</scope>
    <source>
        <tissue>Leukemic T-cell</tissue>
    </source>
</reference>
<reference key="20">
    <citation type="journal article" date="2009" name="Science">
        <title>Lysine acetylation targets protein complexes and co-regulates major cellular functions.</title>
        <authorList>
            <person name="Choudhary C."/>
            <person name="Kumar C."/>
            <person name="Gnad F."/>
            <person name="Nielsen M.L."/>
            <person name="Rehman M."/>
            <person name="Walther T.C."/>
            <person name="Olsen J.V."/>
            <person name="Mann M."/>
        </authorList>
    </citation>
    <scope>ACETYLATION [LARGE SCALE ANALYSIS] AT LYS-656</scope>
    <scope>IDENTIFICATION BY MASS SPECTROMETRY [LARGE SCALE ANALYSIS]</scope>
</reference>
<reference key="21">
    <citation type="journal article" date="2010" name="Sci. Signal.">
        <title>Quantitative phosphoproteomics reveals widespread full phosphorylation site occupancy during mitosis.</title>
        <authorList>
            <person name="Olsen J.V."/>
            <person name="Vermeulen M."/>
            <person name="Santamaria A."/>
            <person name="Kumar C."/>
            <person name="Miller M.L."/>
            <person name="Jensen L.J."/>
            <person name="Gnad F."/>
            <person name="Cox J."/>
            <person name="Jensen T.S."/>
            <person name="Nigg E.A."/>
            <person name="Brunak S."/>
            <person name="Mann M."/>
        </authorList>
    </citation>
    <scope>PHOSPHORYLATION [LARGE SCALE ANALYSIS] AT THR-74; SER-156; THR-160; SER-351; SER-354; SER-370 AND SER-424</scope>
    <scope>IDENTIFICATION BY MASS SPECTROMETRY [LARGE SCALE ANALYSIS]</scope>
    <source>
        <tissue>Cervix carcinoma</tissue>
    </source>
</reference>
<reference key="22">
    <citation type="journal article" date="2011" name="BMC Syst. Biol.">
        <title>Initial characterization of the human central proteome.</title>
        <authorList>
            <person name="Burkard T.R."/>
            <person name="Planyavsky M."/>
            <person name="Kaupe I."/>
            <person name="Breitwieser F.P."/>
            <person name="Buerckstuemmer T."/>
            <person name="Bennett K.L."/>
            <person name="Superti-Furga G."/>
            <person name="Colinge J."/>
        </authorList>
    </citation>
    <scope>IDENTIFICATION BY MASS SPECTROMETRY [LARGE SCALE ANALYSIS]</scope>
</reference>
<reference key="23">
    <citation type="journal article" date="2011" name="Sci. Signal.">
        <title>System-wide temporal characterization of the proteome and phosphoproteome of human embryonic stem cell differentiation.</title>
        <authorList>
            <person name="Rigbolt K.T."/>
            <person name="Prokhorova T.A."/>
            <person name="Akimov V."/>
            <person name="Henningsen J."/>
            <person name="Johansen P.T."/>
            <person name="Kratchmarova I."/>
            <person name="Kassem M."/>
            <person name="Mann M."/>
            <person name="Olsen J.V."/>
            <person name="Blagoev B."/>
        </authorList>
    </citation>
    <scope>PHOSPHORYLATION [LARGE SCALE ANALYSIS] AT SER-59; THR-74; SER-351 AND SER-354</scope>
    <scope>IDENTIFICATION BY MASS SPECTROMETRY [LARGE SCALE ANALYSIS]</scope>
</reference>
<reference key="24">
    <citation type="journal article" date="2013" name="J. Proteome Res.">
        <title>Toward a comprehensive characterization of a human cancer cell phosphoproteome.</title>
        <authorList>
            <person name="Zhou H."/>
            <person name="Di Palma S."/>
            <person name="Preisinger C."/>
            <person name="Peng M."/>
            <person name="Polat A.N."/>
            <person name="Heck A.J."/>
            <person name="Mohammed S."/>
        </authorList>
    </citation>
    <scope>PHOSPHORYLATION [LARGE SCALE ANALYSIS] AT SER-66; SER-67; THR-74; SER-79; SER-156; THR-160; THR-164; SER-168; SER-272; SER-351; SER-354; SER-370 AND SER-424</scope>
    <scope>IDENTIFICATION BY MASS SPECTROMETRY [LARGE SCALE ANALYSIS]</scope>
    <source>
        <tissue>Cervix carcinoma</tissue>
        <tissue>Erythroleukemia</tissue>
    </source>
</reference>
<reference key="25">
    <citation type="journal article" date="2014" name="J. Proteomics">
        <title>An enzyme assisted RP-RPLC approach for in-depth analysis of human liver phosphoproteome.</title>
        <authorList>
            <person name="Bian Y."/>
            <person name="Song C."/>
            <person name="Cheng K."/>
            <person name="Dong M."/>
            <person name="Wang F."/>
            <person name="Huang J."/>
            <person name="Sun D."/>
            <person name="Wang L."/>
            <person name="Ye M."/>
            <person name="Zou H."/>
        </authorList>
    </citation>
    <scope>PHOSPHORYLATION [LARGE SCALE ANALYSIS] AT SER-66; SER-67; THR-74; THR-160; SER-312 AND SER-351</scope>
    <scope>IDENTIFICATION BY MASS SPECTROMETRY [LARGE SCALE ANALYSIS]</scope>
    <source>
        <tissue>Liver</tissue>
    </source>
</reference>
<reference key="26">
    <citation type="journal article" date="2015" name="Proteomics">
        <title>N-terminome analysis of the human mitochondrial proteome.</title>
        <authorList>
            <person name="Vaca Jacome A.S."/>
            <person name="Rabilloud T."/>
            <person name="Schaeffer-Reiss C."/>
            <person name="Rompais M."/>
            <person name="Ayoub D."/>
            <person name="Lane L."/>
            <person name="Bairoch A."/>
            <person name="Van Dorsselaer A."/>
            <person name="Carapito C."/>
        </authorList>
    </citation>
    <scope>IDENTIFICATION BY MASS SPECTROMETRY [LARGE SCALE ANALYSIS]</scope>
</reference>
<reference key="27">
    <citation type="journal article" date="2017" name="Nature">
        <title>CMTM6 maintains the expression of PD-L1 and regulates anti-tumour immunity.</title>
        <authorList>
            <person name="Burr M.L."/>
            <person name="Sparbier C.E."/>
            <person name="Chan Y.C."/>
            <person name="Williamson J.C."/>
            <person name="Woods K."/>
            <person name="Beavis P.A."/>
            <person name="Lam E.Y.N."/>
            <person name="Henderson M.A."/>
            <person name="Bell C.C."/>
            <person name="Stolzenburg S."/>
            <person name="Gilan O."/>
            <person name="Bloor S."/>
            <person name="Noori T."/>
            <person name="Morgens D.W."/>
            <person name="Bassik M.C."/>
            <person name="Neeson P.J."/>
            <person name="Behren A."/>
            <person name="Darcy P.K."/>
            <person name="Dawson S.J."/>
            <person name="Voskoboinik I."/>
            <person name="Trapani J.A."/>
            <person name="Cebon J."/>
            <person name="Lehner P.J."/>
            <person name="Dawson M.A."/>
        </authorList>
    </citation>
    <scope>INTERACTION WITH CMTM6</scope>
    <scope>IDENTIFICATION BY MASS SPECTROMETRY</scope>
</reference>
<reference key="28">
    <citation type="journal article" date="2001" name="EMBO J.">
        <title>Solution structure of the constant region of nuclear envelope protein LAP2 reveals two LEM-domain structures: one binds BAF and the other binds DNA.</title>
        <authorList>
            <person name="Cai M."/>
            <person name="Huang Y."/>
            <person name="Ghirlando R."/>
            <person name="Wilson K.L."/>
            <person name="Craigie R."/>
            <person name="Clore G.M."/>
        </authorList>
    </citation>
    <scope>STRUCTURE BY NMR OF 1-169</scope>
</reference>
<reference key="29">
    <citation type="journal article" date="2001" name="Structure">
        <title>Structural characterization of the LEM motif common to three human inner nuclear membrane proteins.</title>
        <authorList>
            <person name="Laguri C."/>
            <person name="Gilquin B."/>
            <person name="Wolff N."/>
            <person name="Romi-Lebrun R."/>
            <person name="Courchay K."/>
            <person name="Callebaut I."/>
            <person name="Worman H.J."/>
            <person name="Zinn-Justin S."/>
        </authorList>
    </citation>
    <scope>STRUCTURE BY NMR OF 1-57 AND 103-159</scope>
</reference>
<reference key="30">
    <citation type="journal article" date="2005" name="Hum. Mutat.">
        <title>Thymopoietin (lamina-associated polypeptide 2) gene mutation associated with dilated cardiomyopathy.</title>
        <authorList>
            <person name="Taylor M.R."/>
            <person name="Slavov D."/>
            <person name="Gajewski A."/>
            <person name="Vlcek S."/>
            <person name="Ku L."/>
            <person name="Fain P.R."/>
            <person name="Carniel E."/>
            <person name="Di Lenarda A."/>
            <person name="Sinagra G."/>
            <person name="Boucek M.M."/>
            <person name="Cavanaugh J."/>
            <person name="Graw S.L."/>
            <person name="Ruegg P."/>
            <person name="Feiger J."/>
            <person name="Zhu X."/>
            <person name="Ferguson D.A."/>
            <person name="Bristow M.R."/>
            <person name="Gotzmann J."/>
            <person name="Foisner R."/>
            <person name="Mestroni L."/>
        </authorList>
    </citation>
    <scope>VARIANT CYS-690</scope>
    <scope>CHARACTERIZATION OF VARIANT CYS-690</scope>
</reference>
<reference key="31">
    <citation type="journal article" date="2016" name="Mol. Genet. Genomic Med.">
        <title>Analyses of more than 60,000 exomes questions the role of numerous genes previously associated with dilated cardiomyopathy.</title>
        <authorList>
            <person name="Nouhravesh N."/>
            <person name="Ahlberg G."/>
            <person name="Ghouse J."/>
            <person name="Andreasen C."/>
            <person name="Svendsen J.H."/>
            <person name="Haunsoe S."/>
            <person name="Bundgaard H."/>
            <person name="Weeke P.E."/>
            <person name="Olesen M.S."/>
        </authorList>
    </citation>
    <scope>VARIANT CYS-690</scope>
    <scope>LACK OF INVOLVEMENT IN DILATED CARDIOMYOPATHY</scope>
</reference>
<comment type="function">
    <text>May be involved in the structural organization of the nucleus and in the post-mitotic nuclear assembly. Plays an important role, together with LMNA, in the nuclear anchorage of RB1.</text>
</comment>
<comment type="function">
    <text>TP and TP5 may play a role in T-cell development and function. TP5 is an immunomodulating pentapeptide.</text>
</comment>
<comment type="subunit">
    <text evidence="7 8 11 13">Interacts with LMNA, BANF1 and RB1 and with chromosomes. Associates directly or indirectly with lamins at specific cell-cycle stages. Interacts with CMTM6 (PubMed:28813417).</text>
</comment>
<comment type="interaction">
    <interactant intactId="EBI-395393">
        <id>P42166</id>
    </interactant>
    <interactant intactId="EBI-351935">
        <id>P02545</id>
        <label>LMNA</label>
    </interactant>
    <organismsDiffer>false</organismsDiffer>
    <experiments>4</experiments>
</comment>
<comment type="interaction">
    <interactant intactId="EBI-395393">
        <id>P42166</id>
    </interactant>
    <interactant intactId="EBI-1055945">
        <id>Q8TDX7</id>
        <label>NEK7</label>
    </interactant>
    <organismsDiffer>false</organismsDiffer>
    <experiments>2</experiments>
</comment>
<comment type="subcellular location">
    <subcellularLocation>
        <location>Nucleus</location>
    </subcellularLocation>
    <subcellularLocation>
        <location>Chromosome</location>
    </subcellularLocation>
    <text>Expressed diffusely throughout the nucleus.</text>
</comment>
<comment type="alternative products">
    <event type="alternative splicing"/>
    <isoform>
        <id>P42166-1</id>
        <name>Alpha</name>
        <sequence type="displayed"/>
    </isoform>
    <isoform>
        <id>P42167-1</id>
        <name>Beta</name>
        <sequence type="external"/>
    </isoform>
    <isoform>
        <id>P42167-2</id>
        <name>Gamma</name>
        <sequence type="external"/>
    </isoform>
    <isoform>
        <id>P42167-3</id>
        <name>Zeta</name>
        <sequence type="external"/>
    </isoform>
    <text>Additional isoforms seem to exist.</text>
</comment>
<comment type="tissue specificity">
    <text>Expressed in many tissues. Most abundant in adult thymus and fetal liver.</text>
</comment>
<comment type="domain">
    <text>The N-terminal part contains two structurally independent, non-interacting domains: LEM-like (also called LAP2-N or LEM-D) and LEM (also called LAP2-C or LEM-B). LEM-like binds DNA while LEM interacts with BANF1.</text>
</comment>
<comment type="domain">
    <text evidence="1">The C-terminal domain forms a four-stranded coiled coil.</text>
</comment>
<comment type="PTM">
    <text evidence="13">Phosphorylated in a mitose-specific manner.</text>
</comment>
<comment type="pharmaceutical">
    <text>TP5 is available under the names Timunox (Cilag), Sintomodulina (Italofarmaco) and Mepentil (Recordati). Used in primary and secondary immune deficiencies, autoimmunity, infections and cancer.</text>
</comment>
<comment type="similarity">
    <text evidence="15">Belongs to the LEM family.</text>
</comment>
<feature type="initiator methionine" description="Removed" evidence="14">
    <location>
        <position position="1"/>
    </location>
</feature>
<feature type="chain" id="PRO_0000017674" description="Lamina-associated polypeptide 2, isoform alpha">
    <location>
        <begin position="2"/>
        <end position="694"/>
    </location>
</feature>
<feature type="peptide" id="PRO_0000017675" description="Thymopoietin">
    <location>
        <begin position="2"/>
        <end position="50"/>
    </location>
</feature>
<feature type="peptide" id="PRO_0000017676" description="Thymopentin">
    <location>
        <begin position="33"/>
        <end position="37"/>
    </location>
</feature>
<feature type="domain" description="LEM-like" evidence="4 5">
    <location>
        <begin position="5"/>
        <end position="48"/>
    </location>
</feature>
<feature type="domain" description="LEM" evidence="4">
    <location>
        <begin position="109"/>
        <end position="153"/>
    </location>
</feature>
<feature type="region of interest" description="Disordered" evidence="6">
    <location>
        <begin position="47"/>
        <end position="117"/>
    </location>
</feature>
<feature type="region of interest" description="Linker">
    <location>
        <begin position="49"/>
        <end position="108"/>
    </location>
</feature>
<feature type="region of interest" description="Disordered" evidence="6">
    <location>
        <begin position="150"/>
        <end position="209"/>
    </location>
</feature>
<feature type="region of interest" description="Disordered" evidence="6">
    <location>
        <begin position="338"/>
        <end position="368"/>
    </location>
</feature>
<feature type="coiled-coil region" evidence="1">
    <location>
        <begin position="558"/>
        <end position="657"/>
    </location>
</feature>
<feature type="short sequence motif" description="Nuclear localization signal" evidence="3">
    <location>
        <begin position="190"/>
        <end position="196"/>
    </location>
</feature>
<feature type="compositionally biased region" description="Low complexity" evidence="6">
    <location>
        <begin position="78"/>
        <end position="93"/>
    </location>
</feature>
<feature type="compositionally biased region" description="Basic and acidic residues" evidence="6">
    <location>
        <begin position="97"/>
        <end position="106"/>
    </location>
</feature>
<feature type="compositionally biased region" description="Acidic residues" evidence="6">
    <location>
        <begin position="107"/>
        <end position="117"/>
    </location>
</feature>
<feature type="compositionally biased region" description="Polar residues" evidence="6">
    <location>
        <begin position="155"/>
        <end position="178"/>
    </location>
</feature>
<feature type="compositionally biased region" description="Basic and acidic residues" evidence="6">
    <location>
        <begin position="179"/>
        <end position="191"/>
    </location>
</feature>
<feature type="modified residue" description="Phosphothreonine" evidence="19">
    <location>
        <position position="57"/>
    </location>
</feature>
<feature type="modified residue" description="Phosphoserine" evidence="24">
    <location>
        <position position="59"/>
    </location>
</feature>
<feature type="modified residue" description="Phosphoserine" evidence="19 22 25 26">
    <location>
        <position position="66"/>
    </location>
</feature>
<feature type="modified residue" description="Phosphoserine" evidence="19 22 25 26">
    <location>
        <position position="67"/>
    </location>
</feature>
<feature type="modified residue" description="Phosphothreonine" evidence="18 19 20 22 23 24 25 26">
    <location>
        <position position="74"/>
    </location>
</feature>
<feature type="modified residue" description="Phosphoserine" evidence="19 22 25">
    <location>
        <position position="79"/>
    </location>
</feature>
<feature type="modified residue" description="Omega-N-methylarginine" evidence="2">
    <location>
        <position position="86"/>
    </location>
</feature>
<feature type="modified residue" description="Omega-N-methylarginine" evidence="2">
    <location>
        <position position="88"/>
    </location>
</feature>
<feature type="modified residue" description="Phosphothreonine" evidence="22">
    <location>
        <position position="154"/>
    </location>
</feature>
<feature type="modified residue" description="Phosphoserine" evidence="23 25">
    <location>
        <position position="156"/>
    </location>
</feature>
<feature type="modified residue" description="Phosphoserine" evidence="2">
    <location>
        <position position="159"/>
    </location>
</feature>
<feature type="modified residue" description="Phosphothreonine" evidence="19 22 23 25 26">
    <location>
        <position position="160"/>
    </location>
</feature>
<feature type="modified residue" description="Phosphothreonine" evidence="19 25">
    <location>
        <position position="164"/>
    </location>
</feature>
<feature type="modified residue" description="Phosphoserine" evidence="2">
    <location>
        <position position="166"/>
    </location>
</feature>
<feature type="modified residue" description="Phosphoserine" evidence="25">
    <location>
        <position position="168"/>
    </location>
</feature>
<feature type="modified residue" description="Phosphoserine" evidence="25">
    <location>
        <position position="272"/>
    </location>
</feature>
<feature type="modified residue" description="Phosphoserine" evidence="26">
    <location>
        <position position="312"/>
    </location>
</feature>
<feature type="modified residue" description="Phosphoserine" evidence="16 17 19 20 22 23 24 25 26">
    <location>
        <position position="351"/>
    </location>
</feature>
<feature type="modified residue" description="Phosphoserine" evidence="23 24 25">
    <location>
        <position position="354"/>
    </location>
</feature>
<feature type="modified residue" description="Phosphoserine" evidence="19 23 25">
    <location>
        <position position="370"/>
    </location>
</feature>
<feature type="modified residue" description="Phosphoserine" evidence="17 18 19 20 22 23 25">
    <location>
        <position position="424"/>
    </location>
</feature>
<feature type="modified residue" description="N6-acetyllysine" evidence="21">
    <location>
        <position position="656"/>
    </location>
</feature>
<feature type="sequence variant" id="VAR_049773" description="In dbSNP:rs35998138.">
    <original>L</original>
    <variation>R</variation>
    <location>
        <position position="238"/>
    </location>
</feature>
<feature type="sequence variant" id="VAR_049774" description="In dbSNP:rs35645287.">
    <original>S</original>
    <variation>A</variation>
    <location>
        <position position="293"/>
    </location>
</feature>
<feature type="sequence variant" id="VAR_049775" description="In dbSNP:rs35969221.">
    <original>T</original>
    <variation>S</variation>
    <location>
        <position position="317"/>
    </location>
</feature>
<feature type="sequence variant" id="VAR_049776" description="In dbSNP:rs11838270.">
    <original>K</original>
    <variation>E</variation>
    <location>
        <position position="416"/>
    </location>
</feature>
<feature type="sequence variant" id="VAR_049777" description="In dbSNP:rs35761089.">
    <original>K</original>
    <variation>N</variation>
    <location>
        <position position="478"/>
    </location>
</feature>
<feature type="sequence variant" id="VAR_005635" description="In dbSNP:rs17459334." evidence="12">
    <original>Q</original>
    <variation>E</variation>
    <location>
        <position position="599"/>
    </location>
</feature>
<feature type="sequence variant" id="VAR_049778" description="Affects the interaction with LMNA; dbSNP:rs17028450." evidence="9 10">
    <original>R</original>
    <variation>C</variation>
    <location>
        <position position="690"/>
    </location>
</feature>
<feature type="strand" evidence="27">
    <location>
        <begin position="8"/>
        <end position="11"/>
    </location>
</feature>
<feature type="helix" evidence="27">
    <location>
        <begin position="13"/>
        <end position="22"/>
    </location>
</feature>
<feature type="strand" evidence="28">
    <location>
        <begin position="29"/>
        <end position="31"/>
    </location>
</feature>
<feature type="helix" evidence="27">
    <location>
        <begin position="34"/>
        <end position="39"/>
    </location>
</feature>
<feature type="turn" evidence="27">
    <location>
        <begin position="40"/>
        <end position="42"/>
    </location>
</feature>
<feature type="strand" evidence="27">
    <location>
        <begin position="43"/>
        <end position="45"/>
    </location>
</feature>
<feature type="turn" evidence="27">
    <location>
        <begin position="46"/>
        <end position="48"/>
    </location>
</feature>
<feature type="strand" evidence="27">
    <location>
        <begin position="113"/>
        <end position="115"/>
    </location>
</feature>
<feature type="helix" evidence="27">
    <location>
        <begin position="117"/>
        <end position="122"/>
    </location>
</feature>
<feature type="strand" evidence="27">
    <location>
        <begin position="123"/>
        <end position="125"/>
    </location>
</feature>
<feature type="turn" evidence="29">
    <location>
        <begin position="126"/>
        <end position="128"/>
    </location>
</feature>
<feature type="strand" evidence="27">
    <location>
        <begin position="136"/>
        <end position="138"/>
    </location>
</feature>
<feature type="helix" evidence="27">
    <location>
        <begin position="139"/>
        <end position="145"/>
    </location>
</feature>
<feature type="helix" evidence="27">
    <location>
        <begin position="147"/>
        <end position="152"/>
    </location>
</feature>
<organism>
    <name type="scientific">Homo sapiens</name>
    <name type="common">Human</name>
    <dbReference type="NCBI Taxonomy" id="9606"/>
    <lineage>
        <taxon>Eukaryota</taxon>
        <taxon>Metazoa</taxon>
        <taxon>Chordata</taxon>
        <taxon>Craniata</taxon>
        <taxon>Vertebrata</taxon>
        <taxon>Euteleostomi</taxon>
        <taxon>Mammalia</taxon>
        <taxon>Eutheria</taxon>
        <taxon>Euarchontoglires</taxon>
        <taxon>Primates</taxon>
        <taxon>Haplorrhini</taxon>
        <taxon>Catarrhini</taxon>
        <taxon>Hominidae</taxon>
        <taxon>Homo</taxon>
    </lineage>
</organism>
<evidence type="ECO:0000250" key="1"/>
<evidence type="ECO:0000250" key="2">
    <source>
        <dbReference type="UniProtKB" id="Q61033"/>
    </source>
</evidence>
<evidence type="ECO:0000255" key="3"/>
<evidence type="ECO:0000255" key="4">
    <source>
        <dbReference type="PROSITE-ProRule" id="PRU00313"/>
    </source>
</evidence>
<evidence type="ECO:0000255" key="5">
    <source>
        <dbReference type="PROSITE-ProRule" id="PRU00314"/>
    </source>
</evidence>
<evidence type="ECO:0000256" key="6">
    <source>
        <dbReference type="SAM" id="MobiDB-lite"/>
    </source>
</evidence>
<evidence type="ECO:0000269" key="7">
    <source>
    </source>
</evidence>
<evidence type="ECO:0000269" key="8">
    <source>
    </source>
</evidence>
<evidence type="ECO:0000269" key="9">
    <source>
    </source>
</evidence>
<evidence type="ECO:0000269" key="10">
    <source>
    </source>
</evidence>
<evidence type="ECO:0000269" key="11">
    <source>
    </source>
</evidence>
<evidence type="ECO:0000269" key="12">
    <source>
    </source>
</evidence>
<evidence type="ECO:0000269" key="13">
    <source>
    </source>
</evidence>
<evidence type="ECO:0000269" key="14">
    <source ref="4"/>
</evidence>
<evidence type="ECO:0000305" key="15"/>
<evidence type="ECO:0007744" key="16">
    <source>
    </source>
</evidence>
<evidence type="ECO:0007744" key="17">
    <source>
    </source>
</evidence>
<evidence type="ECO:0007744" key="18">
    <source>
    </source>
</evidence>
<evidence type="ECO:0007744" key="19">
    <source>
    </source>
</evidence>
<evidence type="ECO:0007744" key="20">
    <source>
    </source>
</evidence>
<evidence type="ECO:0007744" key="21">
    <source>
    </source>
</evidence>
<evidence type="ECO:0007744" key="22">
    <source>
    </source>
</evidence>
<evidence type="ECO:0007744" key="23">
    <source>
    </source>
</evidence>
<evidence type="ECO:0007744" key="24">
    <source>
    </source>
</evidence>
<evidence type="ECO:0007744" key="25">
    <source>
    </source>
</evidence>
<evidence type="ECO:0007744" key="26">
    <source>
    </source>
</evidence>
<evidence type="ECO:0007829" key="27">
    <source>
        <dbReference type="PDB" id="1GJJ"/>
    </source>
</evidence>
<evidence type="ECO:0007829" key="28">
    <source>
        <dbReference type="PDB" id="1H9E"/>
    </source>
</evidence>
<evidence type="ECO:0007829" key="29">
    <source>
        <dbReference type="PDB" id="1H9F"/>
    </source>
</evidence>
<proteinExistence type="evidence at protein level"/>